<keyword id="KW-0007">Acetylation</keyword>
<keyword id="KW-0963">Cytoplasm</keyword>
<keyword id="KW-0378">Hydrolase</keyword>
<keyword id="KW-0460">Magnesium</keyword>
<keyword id="KW-0479">Metal-binding</keyword>
<keyword id="KW-1185">Reference proteome</keyword>
<protein>
    <recommendedName>
        <fullName>Thiamine-triphosphatase</fullName>
        <shortName>ThTPase</shortName>
        <ecNumber>3.6.1.28</ecNumber>
    </recommendedName>
</protein>
<sequence length="224" mass="24544">MAQGLIEVERKFTPGPDTEERLQKLGATLEHRVTFRDTYYDTSELSLMLSDHWLRQREGSGWEFKCPGVTGVSGPHNEYVEVTSESAIVTQLFELLGSGEQETAGVAAVLGRLKLQEVASFITTRSSWKLALSGAHEEESLLTVDLDSTDFGYAVGEVEAVVHEKAEVPAALEKIISVSSMLGVPAQEKAPAKLLVYLQRFRPQDYQRLLEADSSGEATGDSVP</sequence>
<dbReference type="EC" id="3.6.1.28"/>
<dbReference type="EMBL" id="BC081978">
    <property type="protein sequence ID" value="AAH81978.1"/>
    <property type="molecule type" value="mRNA"/>
</dbReference>
<dbReference type="EMBL" id="AY065967">
    <property type="protein sequence ID" value="AAL41027.1"/>
    <property type="molecule type" value="mRNA"/>
</dbReference>
<dbReference type="RefSeq" id="NP_001007683.1">
    <property type="nucleotide sequence ID" value="NM_001007682.1"/>
</dbReference>
<dbReference type="SMR" id="Q8CGV7"/>
<dbReference type="FunCoup" id="Q8CGV7">
    <property type="interactions" value="564"/>
</dbReference>
<dbReference type="STRING" id="10116.ENSRNOP00000068693"/>
<dbReference type="iPTMnet" id="Q8CGV7"/>
<dbReference type="PhosphoSitePlus" id="Q8CGV7"/>
<dbReference type="PaxDb" id="10116-ENSRNOP00000038507"/>
<dbReference type="GeneID" id="305889"/>
<dbReference type="KEGG" id="rno:305889"/>
<dbReference type="UCSC" id="RGD:727917">
    <property type="organism name" value="rat"/>
</dbReference>
<dbReference type="AGR" id="RGD:727917"/>
<dbReference type="CTD" id="79178"/>
<dbReference type="RGD" id="727917">
    <property type="gene designation" value="Thtpa"/>
</dbReference>
<dbReference type="VEuPathDB" id="HostDB:ENSRNOG00000018105"/>
<dbReference type="eggNOG" id="ENOG502S5G9">
    <property type="taxonomic scope" value="Eukaryota"/>
</dbReference>
<dbReference type="HOGENOM" id="CLU_105907_0_0_1"/>
<dbReference type="InParanoid" id="Q8CGV7"/>
<dbReference type="OrthoDB" id="29960at9989"/>
<dbReference type="PhylomeDB" id="Q8CGV7"/>
<dbReference type="TreeFam" id="TF333398"/>
<dbReference type="BRENDA" id="3.6.1.28">
    <property type="organism ID" value="5301"/>
</dbReference>
<dbReference type="Reactome" id="R-RNO-196819">
    <property type="pathway name" value="Vitamin B1 (thiamin) metabolism"/>
</dbReference>
<dbReference type="PRO" id="PR:Q8CGV7"/>
<dbReference type="Proteomes" id="UP000002494">
    <property type="component" value="Chromosome 15"/>
</dbReference>
<dbReference type="Bgee" id="ENSRNOG00000018105">
    <property type="expression patterns" value="Expressed in cerebellum and 20 other cell types or tissues"/>
</dbReference>
<dbReference type="ExpressionAtlas" id="Q8CGV7">
    <property type="expression patterns" value="baseline and differential"/>
</dbReference>
<dbReference type="GO" id="GO:0005829">
    <property type="term" value="C:cytosol"/>
    <property type="evidence" value="ECO:0000266"/>
    <property type="project" value="RGD"/>
</dbReference>
<dbReference type="GO" id="GO:0000287">
    <property type="term" value="F:magnesium ion binding"/>
    <property type="evidence" value="ECO:0000250"/>
    <property type="project" value="UniProtKB"/>
</dbReference>
<dbReference type="GO" id="GO:0050333">
    <property type="term" value="F:thiamine triphosphate phosphatase activity"/>
    <property type="evidence" value="ECO:0000250"/>
    <property type="project" value="UniProtKB"/>
</dbReference>
<dbReference type="GO" id="GO:0009229">
    <property type="term" value="P:thiamine diphosphate biosynthetic process"/>
    <property type="evidence" value="ECO:0000266"/>
    <property type="project" value="RGD"/>
</dbReference>
<dbReference type="GO" id="GO:0042357">
    <property type="term" value="P:thiamine diphosphate metabolic process"/>
    <property type="evidence" value="ECO:0000250"/>
    <property type="project" value="UniProtKB"/>
</dbReference>
<dbReference type="GO" id="GO:0006772">
    <property type="term" value="P:thiamine metabolic process"/>
    <property type="evidence" value="ECO:0007669"/>
    <property type="project" value="InterPro"/>
</dbReference>
<dbReference type="CDD" id="cd07758">
    <property type="entry name" value="ThTPase"/>
    <property type="match status" value="1"/>
</dbReference>
<dbReference type="FunFam" id="2.40.320.10:FF:000005">
    <property type="entry name" value="Thiamine-triphosphatase"/>
    <property type="match status" value="1"/>
</dbReference>
<dbReference type="Gene3D" id="2.40.320.10">
    <property type="entry name" value="Hypothetical Protein Pfu-838710-001"/>
    <property type="match status" value="1"/>
</dbReference>
<dbReference type="InterPro" id="IPR033469">
    <property type="entry name" value="CYTH-like_dom_sf"/>
</dbReference>
<dbReference type="InterPro" id="IPR023577">
    <property type="entry name" value="CYTH_domain"/>
</dbReference>
<dbReference type="InterPro" id="IPR039582">
    <property type="entry name" value="THTPA"/>
</dbReference>
<dbReference type="InterPro" id="IPR012177">
    <property type="entry name" value="ThTPase_euk"/>
</dbReference>
<dbReference type="PANTHER" id="PTHR14586">
    <property type="entry name" value="THIAMINE-TRIPHOSPHATASE"/>
    <property type="match status" value="1"/>
</dbReference>
<dbReference type="PANTHER" id="PTHR14586:SF1">
    <property type="entry name" value="THIAMINE-TRIPHOSPHATASE"/>
    <property type="match status" value="1"/>
</dbReference>
<dbReference type="Pfam" id="PF01928">
    <property type="entry name" value="CYTH"/>
    <property type="match status" value="1"/>
</dbReference>
<dbReference type="PIRSF" id="PIRSF036561">
    <property type="entry name" value="ThTPase"/>
    <property type="match status" value="1"/>
</dbReference>
<dbReference type="SMART" id="SM01118">
    <property type="entry name" value="CYTH"/>
    <property type="match status" value="1"/>
</dbReference>
<dbReference type="SUPFAM" id="SSF55154">
    <property type="entry name" value="CYTH-like phosphatases"/>
    <property type="match status" value="1"/>
</dbReference>
<dbReference type="PROSITE" id="PS51707">
    <property type="entry name" value="CYTH"/>
    <property type="match status" value="1"/>
</dbReference>
<organism>
    <name type="scientific">Rattus norvegicus</name>
    <name type="common">Rat</name>
    <dbReference type="NCBI Taxonomy" id="10116"/>
    <lineage>
        <taxon>Eukaryota</taxon>
        <taxon>Metazoa</taxon>
        <taxon>Chordata</taxon>
        <taxon>Craniata</taxon>
        <taxon>Vertebrata</taxon>
        <taxon>Euteleostomi</taxon>
        <taxon>Mammalia</taxon>
        <taxon>Eutheria</taxon>
        <taxon>Euarchontoglires</taxon>
        <taxon>Glires</taxon>
        <taxon>Rodentia</taxon>
        <taxon>Myomorpha</taxon>
        <taxon>Muroidea</taxon>
        <taxon>Muridae</taxon>
        <taxon>Murinae</taxon>
        <taxon>Rattus</taxon>
    </lineage>
</organism>
<gene>
    <name type="primary">Thtpa</name>
</gene>
<evidence type="ECO:0000250" key="1"/>
<evidence type="ECO:0000250" key="2">
    <source>
        <dbReference type="UniProtKB" id="Q8MKF1"/>
    </source>
</evidence>
<evidence type="ECO:0000255" key="3">
    <source>
        <dbReference type="PROSITE-ProRule" id="PRU01044"/>
    </source>
</evidence>
<evidence type="ECO:0000305" key="4"/>
<feature type="initiator methionine" description="Removed" evidence="2">
    <location>
        <position position="1"/>
    </location>
</feature>
<feature type="chain" id="PRO_0000221493" description="Thiamine-triphosphatase">
    <location>
        <begin position="2"/>
        <end position="224"/>
    </location>
</feature>
<feature type="domain" description="CYTH" evidence="3">
    <location>
        <begin position="5"/>
        <end position="201"/>
    </location>
</feature>
<feature type="binding site" evidence="1">
    <location>
        <position position="7"/>
    </location>
    <ligand>
        <name>Mg(2+)</name>
        <dbReference type="ChEBI" id="CHEBI:18420"/>
    </ligand>
</feature>
<feature type="binding site" evidence="1">
    <location>
        <position position="9"/>
    </location>
    <ligand>
        <name>Mg(2+)</name>
        <dbReference type="ChEBI" id="CHEBI:18420"/>
    </ligand>
</feature>
<feature type="binding site" evidence="1">
    <location>
        <position position="11"/>
    </location>
    <ligand>
        <name>substrate</name>
    </ligand>
</feature>
<feature type="binding site" evidence="1">
    <location>
        <position position="55"/>
    </location>
    <ligand>
        <name>substrate</name>
    </ligand>
</feature>
<feature type="binding site" evidence="1">
    <location>
        <position position="57"/>
    </location>
    <ligand>
        <name>substrate</name>
    </ligand>
</feature>
<feature type="binding site" evidence="1">
    <location>
        <position position="65"/>
    </location>
    <ligand>
        <name>substrate</name>
    </ligand>
</feature>
<feature type="binding site" evidence="1">
    <location>
        <position position="125"/>
    </location>
    <ligand>
        <name>substrate</name>
    </ligand>
</feature>
<feature type="binding site" evidence="1">
    <location>
        <position position="145"/>
    </location>
    <ligand>
        <name>Mg(2+)</name>
        <dbReference type="ChEBI" id="CHEBI:18420"/>
    </ligand>
</feature>
<feature type="binding site" evidence="1">
    <location>
        <position position="157"/>
    </location>
    <ligand>
        <name>Mg(2+)</name>
        <dbReference type="ChEBI" id="CHEBI:18420"/>
    </ligand>
</feature>
<feature type="binding site" evidence="1">
    <location>
        <position position="157"/>
    </location>
    <ligand>
        <name>substrate</name>
    </ligand>
</feature>
<feature type="binding site" evidence="1">
    <location>
        <position position="159"/>
    </location>
    <ligand>
        <name>Mg(2+)</name>
        <dbReference type="ChEBI" id="CHEBI:18420"/>
    </ligand>
</feature>
<feature type="binding site" evidence="1">
    <location>
        <position position="193"/>
    </location>
    <ligand>
        <name>substrate</name>
    </ligand>
</feature>
<feature type="modified residue" description="N-acetylalanine" evidence="2">
    <location>
        <position position="2"/>
    </location>
</feature>
<accession>Q8CGV7</accession>
<name>THTPA_RAT</name>
<comment type="function">
    <text evidence="1">Hydrolase highly specific for thiamine triphosphate (ThTP).</text>
</comment>
<comment type="catalytic activity">
    <reaction>
        <text>thiamine triphosphate + H2O = thiamine diphosphate + phosphate + H(+)</text>
        <dbReference type="Rhea" id="RHEA:11744"/>
        <dbReference type="ChEBI" id="CHEBI:15377"/>
        <dbReference type="ChEBI" id="CHEBI:15378"/>
        <dbReference type="ChEBI" id="CHEBI:43474"/>
        <dbReference type="ChEBI" id="CHEBI:58937"/>
        <dbReference type="ChEBI" id="CHEBI:58938"/>
        <dbReference type="EC" id="3.6.1.28"/>
    </reaction>
</comment>
<comment type="cofactor">
    <cofactor evidence="1">
        <name>Mg(2+)</name>
        <dbReference type="ChEBI" id="CHEBI:18420"/>
    </cofactor>
    <text evidence="1">Binds 1 Mg(2+) ion per subunit.</text>
</comment>
<comment type="subunit">
    <text evidence="1">Monomer.</text>
</comment>
<comment type="subcellular location">
    <subcellularLocation>
        <location evidence="1">Cytoplasm</location>
    </subcellularLocation>
</comment>
<comment type="similarity">
    <text evidence="4">Belongs to the ThTPase family.</text>
</comment>
<proteinExistence type="evidence at transcript level"/>
<reference key="1">
    <citation type="journal article" date="2004" name="Genome Res.">
        <title>The status, quality, and expansion of the NIH full-length cDNA project: the Mammalian Gene Collection (MGC).</title>
        <authorList>
            <consortium name="The MGC Project Team"/>
        </authorList>
    </citation>
    <scope>NUCLEOTIDE SEQUENCE [LARGE SCALE MRNA]</scope>
    <source>
        <tissue>Kidney</tissue>
    </source>
</reference>
<reference key="2">
    <citation type="submission" date="2001-12" db="EMBL/GenBank/DDBJ databases">
        <title>Isolation and characterization of the rat ThTPase cDNA.</title>
        <authorList>
            <person name="Lakaye B.B."/>
            <person name="Coumans B.B."/>
            <person name="Makarchikov A.A."/>
            <person name="Grisar T.T."/>
            <person name="Bettendorff L.L."/>
        </authorList>
    </citation>
    <scope>NUCLEOTIDE SEQUENCE [MRNA] OF 93-224</scope>
    <source>
        <strain>Wistar</strain>
    </source>
</reference>